<comment type="subunit">
    <text evidence="2">Forms oligomeric structures.</text>
</comment>
<comment type="subcellular location">
    <subcellularLocation>
        <location evidence="5">Cytoplasm</location>
    </subcellularLocation>
</comment>
<comment type="induction">
    <text evidence="3 4">By heat shock.</text>
</comment>
<comment type="similarity">
    <text evidence="1">Belongs to the small heat shock protein (HSP20) family.</text>
</comment>
<organism>
    <name type="scientific">Oryza sativa subsp. japonica</name>
    <name type="common">Rice</name>
    <dbReference type="NCBI Taxonomy" id="39947"/>
    <lineage>
        <taxon>Eukaryota</taxon>
        <taxon>Viridiplantae</taxon>
        <taxon>Streptophyta</taxon>
        <taxon>Embryophyta</taxon>
        <taxon>Tracheophyta</taxon>
        <taxon>Spermatophyta</taxon>
        <taxon>Magnoliopsida</taxon>
        <taxon>Liliopsida</taxon>
        <taxon>Poales</taxon>
        <taxon>Poaceae</taxon>
        <taxon>BOP clade</taxon>
        <taxon>Oryzoideae</taxon>
        <taxon>Oryzeae</taxon>
        <taxon>Oryzinae</taxon>
        <taxon>Oryza</taxon>
        <taxon>Oryza sativa</taxon>
    </lineage>
</organism>
<feature type="chain" id="PRO_0000125980" description="16.9 kDa class I heat shock protein 1">
    <location>
        <begin position="1"/>
        <end position="150"/>
    </location>
</feature>
<feature type="domain" description="sHSP" evidence="1">
    <location>
        <begin position="36"/>
        <end position="150"/>
    </location>
</feature>
<feature type="region of interest" description="Important for thermostability under elevated temperature">
    <location>
        <begin position="1"/>
        <end position="42"/>
    </location>
</feature>
<dbReference type="EMBL" id="X60820">
    <property type="protein sequence ID" value="CAA43210.1"/>
    <property type="molecule type" value="mRNA"/>
</dbReference>
<dbReference type="EMBL" id="M80938">
    <property type="protein sequence ID" value="AAA33909.1"/>
    <property type="molecule type" value="Genomic_DNA"/>
</dbReference>
<dbReference type="EMBL" id="EU846988">
    <property type="protein sequence ID" value="ACJ54892.1"/>
    <property type="molecule type" value="mRNA"/>
</dbReference>
<dbReference type="EMBL" id="AP003250">
    <property type="protein sequence ID" value="BAB64126.1"/>
    <property type="molecule type" value="Genomic_DNA"/>
</dbReference>
<dbReference type="EMBL" id="AP008207">
    <property type="protein sequence ID" value="BAF03868.1"/>
    <property type="molecule type" value="Genomic_DNA"/>
</dbReference>
<dbReference type="EMBL" id="AP014957">
    <property type="protein sequence ID" value="BAS70263.1"/>
    <property type="molecule type" value="Genomic_DNA"/>
</dbReference>
<dbReference type="EMBL" id="CM000138">
    <property type="protein sequence ID" value="EAZ10446.1"/>
    <property type="molecule type" value="Genomic_DNA"/>
</dbReference>
<dbReference type="EMBL" id="AK242299">
    <property type="protein sequence ID" value="BAH01253.1"/>
    <property type="molecule type" value="mRNA"/>
</dbReference>
<dbReference type="PIR" id="S20874">
    <property type="entry name" value="S20874"/>
</dbReference>
<dbReference type="RefSeq" id="XP_015625199.1">
    <property type="nucleotide sequence ID" value="XM_015769713.1"/>
</dbReference>
<dbReference type="SMR" id="P27777"/>
<dbReference type="BioGRID" id="794734">
    <property type="interactions" value="1"/>
</dbReference>
<dbReference type="FunCoup" id="P27777">
    <property type="interactions" value="447"/>
</dbReference>
<dbReference type="STRING" id="39947.P27777"/>
<dbReference type="PaxDb" id="39947-P27777"/>
<dbReference type="EnsemblPlants" id="Os01t0136100-01">
    <property type="protein sequence ID" value="Os01t0136100-01"/>
    <property type="gene ID" value="Os01g0136100"/>
</dbReference>
<dbReference type="Gramene" id="Os01t0136100-01">
    <property type="protein sequence ID" value="Os01t0136100-01"/>
    <property type="gene ID" value="Os01g0136100"/>
</dbReference>
<dbReference type="KEGG" id="dosa:Os01g0136100"/>
<dbReference type="eggNOG" id="KOG0710">
    <property type="taxonomic scope" value="Eukaryota"/>
</dbReference>
<dbReference type="HOGENOM" id="CLU_046737_5_0_1"/>
<dbReference type="InParanoid" id="P27777"/>
<dbReference type="OMA" id="LMRRNDW"/>
<dbReference type="OrthoDB" id="5511210at2759"/>
<dbReference type="Proteomes" id="UP000000763">
    <property type="component" value="Chromosome 1"/>
</dbReference>
<dbReference type="Proteomes" id="UP000007752">
    <property type="component" value="Chromosome 1"/>
</dbReference>
<dbReference type="Proteomes" id="UP000059680">
    <property type="component" value="Chromosome 1"/>
</dbReference>
<dbReference type="GO" id="GO:0005737">
    <property type="term" value="C:cytoplasm"/>
    <property type="evidence" value="ECO:0007669"/>
    <property type="project" value="UniProtKB-SubCell"/>
</dbReference>
<dbReference type="GO" id="GO:0051082">
    <property type="term" value="F:unfolded protein binding"/>
    <property type="evidence" value="ECO:0000318"/>
    <property type="project" value="GO_Central"/>
</dbReference>
<dbReference type="GO" id="GO:0051259">
    <property type="term" value="P:protein complex oligomerization"/>
    <property type="evidence" value="ECO:0000314"/>
    <property type="project" value="UniProtKB"/>
</dbReference>
<dbReference type="GO" id="GO:0006457">
    <property type="term" value="P:protein folding"/>
    <property type="evidence" value="ECO:0000318"/>
    <property type="project" value="GO_Central"/>
</dbReference>
<dbReference type="GO" id="GO:0009408">
    <property type="term" value="P:response to heat"/>
    <property type="evidence" value="ECO:0000314"/>
    <property type="project" value="UniProtKB"/>
</dbReference>
<dbReference type="GO" id="GO:0042542">
    <property type="term" value="P:response to hydrogen peroxide"/>
    <property type="evidence" value="ECO:0000318"/>
    <property type="project" value="GO_Central"/>
</dbReference>
<dbReference type="GO" id="GO:0009651">
    <property type="term" value="P:response to salt stress"/>
    <property type="evidence" value="ECO:0000318"/>
    <property type="project" value="GO_Central"/>
</dbReference>
<dbReference type="CDD" id="cd06472">
    <property type="entry name" value="ACD_ScHsp26_like"/>
    <property type="match status" value="1"/>
</dbReference>
<dbReference type="FunFam" id="2.60.40.790:FF:000007">
    <property type="entry name" value="17.4 kDa class I heat shock protein"/>
    <property type="match status" value="1"/>
</dbReference>
<dbReference type="Gene3D" id="2.60.40.790">
    <property type="match status" value="1"/>
</dbReference>
<dbReference type="InterPro" id="IPR002068">
    <property type="entry name" value="A-crystallin/Hsp20_dom"/>
</dbReference>
<dbReference type="InterPro" id="IPR008978">
    <property type="entry name" value="HSP20-like_chaperone"/>
</dbReference>
<dbReference type="InterPro" id="IPR031107">
    <property type="entry name" value="Small_HSP"/>
</dbReference>
<dbReference type="PANTHER" id="PTHR11527">
    <property type="entry name" value="HEAT-SHOCK PROTEIN 20 FAMILY MEMBER"/>
    <property type="match status" value="1"/>
</dbReference>
<dbReference type="Pfam" id="PF00011">
    <property type="entry name" value="HSP20"/>
    <property type="match status" value="1"/>
</dbReference>
<dbReference type="SUPFAM" id="SSF49764">
    <property type="entry name" value="HSP20-like chaperones"/>
    <property type="match status" value="1"/>
</dbReference>
<dbReference type="PROSITE" id="PS01031">
    <property type="entry name" value="SHSP"/>
    <property type="match status" value="1"/>
</dbReference>
<accession>P27777</accession>
<accession>A0A0P0UXT9</accession>
<accession>Q0JQW0</accession>
<accession>Q7F5E9</accession>
<keyword id="KW-0963">Cytoplasm</keyword>
<keyword id="KW-0903">Direct protein sequencing</keyword>
<keyword id="KW-1185">Reference proteome</keyword>
<keyword id="KW-0346">Stress response</keyword>
<proteinExistence type="evidence at protein level"/>
<evidence type="ECO:0000255" key="1">
    <source>
        <dbReference type="PROSITE-ProRule" id="PRU00285"/>
    </source>
</evidence>
<evidence type="ECO:0000269" key="2">
    <source>
    </source>
</evidence>
<evidence type="ECO:0000269" key="3">
    <source>
    </source>
</evidence>
<evidence type="ECO:0000269" key="4">
    <source>
    </source>
</evidence>
<evidence type="ECO:0000305" key="5"/>
<name>HS16A_ORYSJ</name>
<reference key="1">
    <citation type="journal article" date="1992" name="Plant Mol. Biol.">
        <title>Two rice (Oryza sativa) full-length cDNA clones encoding low-molecular-weight heat-shock proteins.</title>
        <authorList>
            <person name="Tseng T.-S."/>
            <person name="Yeh K.-W."/>
            <person name="Yeh C.-H."/>
            <person name="Chang F.-C."/>
            <person name="Chen Y.-M."/>
            <person name="Lin C.-Y."/>
        </authorList>
    </citation>
    <scope>NUCLEOTIDE SEQUENCE [MRNA]</scope>
    <source>
        <strain>cv. Tainung 67</strain>
    </source>
</reference>
<reference key="2">
    <citation type="journal article" date="1992" name="Plant Physiol.">
        <title>Two Oryza sativa genomic DNA clones for 16.9-kilodalton heat shock proteins.</title>
        <authorList>
            <person name="Tzeng S."/>
            <person name="Yeh K.-W."/>
            <person name="Chen Y.-M."/>
            <person name="Lin C.-Y."/>
        </authorList>
    </citation>
    <scope>NUCLEOTIDE SEQUENCE [GENOMIC DNA]</scope>
    <source>
        <strain>cv. Tainung 67</strain>
    </source>
</reference>
<reference key="3">
    <citation type="submission" date="2008-06" db="EMBL/GenBank/DDBJ databases">
        <title>Molecular cloning of 16.9kDa heat shock protein gene in rice.</title>
        <authorList>
            <person name="Yoon U.H."/>
            <person name="Kim Y.H."/>
        </authorList>
    </citation>
    <scope>NUCLEOTIDE SEQUENCE [MRNA]</scope>
    <source>
        <strain>cv. Ilpoombyeo</strain>
        <tissue>Seed</tissue>
    </source>
</reference>
<reference key="4">
    <citation type="journal article" date="2002" name="Nature">
        <title>The genome sequence and structure of rice chromosome 1.</title>
        <authorList>
            <person name="Sasaki T."/>
            <person name="Matsumoto T."/>
            <person name="Yamamoto K."/>
            <person name="Sakata K."/>
            <person name="Baba T."/>
            <person name="Katayose Y."/>
            <person name="Wu J."/>
            <person name="Niimura Y."/>
            <person name="Cheng Z."/>
            <person name="Nagamura Y."/>
            <person name="Antonio B.A."/>
            <person name="Kanamori H."/>
            <person name="Hosokawa S."/>
            <person name="Masukawa M."/>
            <person name="Arikawa K."/>
            <person name="Chiden Y."/>
            <person name="Hayashi M."/>
            <person name="Okamoto M."/>
            <person name="Ando T."/>
            <person name="Aoki H."/>
            <person name="Arita K."/>
            <person name="Hamada M."/>
            <person name="Harada C."/>
            <person name="Hijishita S."/>
            <person name="Honda M."/>
            <person name="Ichikawa Y."/>
            <person name="Idonuma A."/>
            <person name="Iijima M."/>
            <person name="Ikeda M."/>
            <person name="Ikeno M."/>
            <person name="Ito S."/>
            <person name="Ito T."/>
            <person name="Ito Y."/>
            <person name="Ito Y."/>
            <person name="Iwabuchi A."/>
            <person name="Kamiya K."/>
            <person name="Karasawa W."/>
            <person name="Katagiri S."/>
            <person name="Kikuta A."/>
            <person name="Kobayashi N."/>
            <person name="Kono I."/>
            <person name="Machita K."/>
            <person name="Maehara T."/>
            <person name="Mizuno H."/>
            <person name="Mizubayashi T."/>
            <person name="Mukai Y."/>
            <person name="Nagasaki H."/>
            <person name="Nakashima M."/>
            <person name="Nakama Y."/>
            <person name="Nakamichi Y."/>
            <person name="Nakamura M."/>
            <person name="Namiki N."/>
            <person name="Negishi M."/>
            <person name="Ohta I."/>
            <person name="Ono N."/>
            <person name="Saji S."/>
            <person name="Sakai K."/>
            <person name="Shibata M."/>
            <person name="Shimokawa T."/>
            <person name="Shomura A."/>
            <person name="Song J."/>
            <person name="Takazaki Y."/>
            <person name="Terasawa K."/>
            <person name="Tsuji K."/>
            <person name="Waki K."/>
            <person name="Yamagata H."/>
            <person name="Yamane H."/>
            <person name="Yoshiki S."/>
            <person name="Yoshihara R."/>
            <person name="Yukawa K."/>
            <person name="Zhong H."/>
            <person name="Iwama H."/>
            <person name="Endo T."/>
            <person name="Ito H."/>
            <person name="Hahn J.H."/>
            <person name="Kim H.-I."/>
            <person name="Eun M.-Y."/>
            <person name="Yano M."/>
            <person name="Jiang J."/>
            <person name="Gojobori T."/>
        </authorList>
    </citation>
    <scope>NUCLEOTIDE SEQUENCE [LARGE SCALE GENOMIC DNA]</scope>
    <source>
        <strain>cv. Nipponbare</strain>
    </source>
</reference>
<reference key="5">
    <citation type="journal article" date="2005" name="Nature">
        <title>The map-based sequence of the rice genome.</title>
        <authorList>
            <consortium name="International rice genome sequencing project (IRGSP)"/>
        </authorList>
    </citation>
    <scope>NUCLEOTIDE SEQUENCE [LARGE SCALE GENOMIC DNA]</scope>
    <source>
        <strain>cv. Nipponbare</strain>
    </source>
</reference>
<reference key="6">
    <citation type="journal article" date="2008" name="Nucleic Acids Res.">
        <title>The rice annotation project database (RAP-DB): 2008 update.</title>
        <authorList>
            <consortium name="The rice annotation project (RAP)"/>
        </authorList>
    </citation>
    <scope>GENOME REANNOTATION</scope>
    <source>
        <strain>cv. Nipponbare</strain>
    </source>
</reference>
<reference key="7">
    <citation type="journal article" date="2013" name="Rice">
        <title>Improvement of the Oryza sativa Nipponbare reference genome using next generation sequence and optical map data.</title>
        <authorList>
            <person name="Kawahara Y."/>
            <person name="de la Bastide M."/>
            <person name="Hamilton J.P."/>
            <person name="Kanamori H."/>
            <person name="McCombie W.R."/>
            <person name="Ouyang S."/>
            <person name="Schwartz D.C."/>
            <person name="Tanaka T."/>
            <person name="Wu J."/>
            <person name="Zhou S."/>
            <person name="Childs K.L."/>
            <person name="Davidson R.M."/>
            <person name="Lin H."/>
            <person name="Quesada-Ocampo L."/>
            <person name="Vaillancourt B."/>
            <person name="Sakai H."/>
            <person name="Lee S.S."/>
            <person name="Kim J."/>
            <person name="Numa H."/>
            <person name="Itoh T."/>
            <person name="Buell C.R."/>
            <person name="Matsumoto T."/>
        </authorList>
    </citation>
    <scope>GENOME REANNOTATION</scope>
    <source>
        <strain>cv. Nipponbare</strain>
    </source>
</reference>
<reference key="8">
    <citation type="journal article" date="2005" name="PLoS Biol.">
        <title>The genomes of Oryza sativa: a history of duplications.</title>
        <authorList>
            <person name="Yu J."/>
            <person name="Wang J."/>
            <person name="Lin W."/>
            <person name="Li S."/>
            <person name="Li H."/>
            <person name="Zhou J."/>
            <person name="Ni P."/>
            <person name="Dong W."/>
            <person name="Hu S."/>
            <person name="Zeng C."/>
            <person name="Zhang J."/>
            <person name="Zhang Y."/>
            <person name="Li R."/>
            <person name="Xu Z."/>
            <person name="Li S."/>
            <person name="Li X."/>
            <person name="Zheng H."/>
            <person name="Cong L."/>
            <person name="Lin L."/>
            <person name="Yin J."/>
            <person name="Geng J."/>
            <person name="Li G."/>
            <person name="Shi J."/>
            <person name="Liu J."/>
            <person name="Lv H."/>
            <person name="Li J."/>
            <person name="Wang J."/>
            <person name="Deng Y."/>
            <person name="Ran L."/>
            <person name="Shi X."/>
            <person name="Wang X."/>
            <person name="Wu Q."/>
            <person name="Li C."/>
            <person name="Ren X."/>
            <person name="Wang J."/>
            <person name="Wang X."/>
            <person name="Li D."/>
            <person name="Liu D."/>
            <person name="Zhang X."/>
            <person name="Ji Z."/>
            <person name="Zhao W."/>
            <person name="Sun Y."/>
            <person name="Zhang Z."/>
            <person name="Bao J."/>
            <person name="Han Y."/>
            <person name="Dong L."/>
            <person name="Ji J."/>
            <person name="Chen P."/>
            <person name="Wu S."/>
            <person name="Liu J."/>
            <person name="Xiao Y."/>
            <person name="Bu D."/>
            <person name="Tan J."/>
            <person name="Yang L."/>
            <person name="Ye C."/>
            <person name="Zhang J."/>
            <person name="Xu J."/>
            <person name="Zhou Y."/>
            <person name="Yu Y."/>
            <person name="Zhang B."/>
            <person name="Zhuang S."/>
            <person name="Wei H."/>
            <person name="Liu B."/>
            <person name="Lei M."/>
            <person name="Yu H."/>
            <person name="Li Y."/>
            <person name="Xu H."/>
            <person name="Wei S."/>
            <person name="He X."/>
            <person name="Fang L."/>
            <person name="Zhang Z."/>
            <person name="Zhang Y."/>
            <person name="Huang X."/>
            <person name="Su Z."/>
            <person name="Tong W."/>
            <person name="Li J."/>
            <person name="Tong Z."/>
            <person name="Li S."/>
            <person name="Ye J."/>
            <person name="Wang L."/>
            <person name="Fang L."/>
            <person name="Lei T."/>
            <person name="Chen C.-S."/>
            <person name="Chen H.-C."/>
            <person name="Xu Z."/>
            <person name="Li H."/>
            <person name="Huang H."/>
            <person name="Zhang F."/>
            <person name="Xu H."/>
            <person name="Li N."/>
            <person name="Zhao C."/>
            <person name="Li S."/>
            <person name="Dong L."/>
            <person name="Huang Y."/>
            <person name="Li L."/>
            <person name="Xi Y."/>
            <person name="Qi Q."/>
            <person name="Li W."/>
            <person name="Zhang B."/>
            <person name="Hu W."/>
            <person name="Zhang Y."/>
            <person name="Tian X."/>
            <person name="Jiao Y."/>
            <person name="Liang X."/>
            <person name="Jin J."/>
            <person name="Gao L."/>
            <person name="Zheng W."/>
            <person name="Hao B."/>
            <person name="Liu S.-M."/>
            <person name="Wang W."/>
            <person name="Yuan L."/>
            <person name="Cao M."/>
            <person name="McDermott J."/>
            <person name="Samudrala R."/>
            <person name="Wang J."/>
            <person name="Wong G.K.-S."/>
            <person name="Yang H."/>
        </authorList>
    </citation>
    <scope>NUCLEOTIDE SEQUENCE [LARGE SCALE GENOMIC DNA]</scope>
    <source>
        <strain>cv. Nipponbare</strain>
    </source>
</reference>
<reference key="9">
    <citation type="submission" date="2006-10" db="EMBL/GenBank/DDBJ databases">
        <title>Oryza sativa full length cDNA.</title>
        <authorList>
            <consortium name="The rice full-length cDNA consortium"/>
        </authorList>
    </citation>
    <scope>NUCLEOTIDE SEQUENCE [LARGE SCALE MRNA]</scope>
    <source>
        <strain>cv. Nipponbare</strain>
    </source>
</reference>
<reference key="10">
    <citation type="journal article" date="2004" name="Nucleic Acids Res.">
        <title>Rice proteome database based on two-dimensional polyacrylamide gel electrophoresis: its status in 2003.</title>
        <authorList>
            <person name="Komatsu S."/>
            <person name="Kojima K."/>
            <person name="Suzuki K."/>
            <person name="Ozaki K."/>
            <person name="Higo K."/>
        </authorList>
    </citation>
    <scope>PROTEIN SEQUENCE OF 75-84</scope>
    <source>
        <strain>cv. Nipponbare</strain>
        <tissue>Embryo</tissue>
    </source>
</reference>
<reference key="11">
    <citation type="journal article" date="1999" name="Biochem. J.">
        <title>Molecular characterization of Oryza sativa 16.9 kDa heat shock protein.</title>
        <authorList>
            <person name="Young L.-S."/>
            <person name="Yeh C.-H."/>
            <person name="Chen Y.-M."/>
            <person name="Lin C.-Y."/>
        </authorList>
    </citation>
    <scope>SUBUNIT</scope>
    <scope>REGION</scope>
</reference>
<reference key="12">
    <citation type="journal article" date="2004" name="Plant Mol. Biol.">
        <title>Characterization of the genomic structures and selective expression profiles of nine class I small heat shock protein genes clustered on two chromosomes in rice (Oryza sativa L.).</title>
        <authorList>
            <person name="Guan J.-C."/>
            <person name="Jinn T.-L."/>
            <person name="Yeh C.-H."/>
            <person name="Feng S.-P."/>
            <person name="Chen Y.-M."/>
            <person name="Lin C.-Y."/>
        </authorList>
    </citation>
    <scope>INDUCTION</scope>
</reference>
<reference key="13">
    <citation type="journal article" date="2009" name="BMC Genomics">
        <title>Rice sHsp genes: genomic organization and expression profiling under stress and development.</title>
        <authorList>
            <person name="Sarkar N.K."/>
            <person name="Kim Y.-K."/>
            <person name="Grover A."/>
        </authorList>
    </citation>
    <scope>INDUCTION</scope>
    <scope>GENE FAMILY</scope>
</reference>
<sequence length="150" mass="16939">MSLVRRSNVFDPFSLDLWDPFDSVFRSVVPATSDNDTAAFANARIDWKETPESHVFKADLPGVKKEEVKVEVEEGNVLVISGQRSKEKEDKNDKWHRVERSSGQFMRRFRLPENAKVDQVKAGLENGVLTVTVPKAEVKKPEVKAIEISG</sequence>
<protein>
    <recommendedName>
        <fullName>16.9 kDa class I heat shock protein 1</fullName>
    </recommendedName>
    <alternativeName>
        <fullName>16.9 kDa heat shock protein 1</fullName>
        <shortName>OsHsp16.9A</shortName>
    </alternativeName>
</protein>
<gene>
    <name type="primary">HSP16.9A</name>
    <name type="ordered locus">Os01g0136100</name>
    <name type="ordered locus">LOC_Os01g04370</name>
    <name type="ORF">OsJ_00279</name>
    <name type="ORF">P0443D08.5</name>
</gene>